<keyword id="KW-0687">Ribonucleoprotein</keyword>
<keyword id="KW-0689">Ribosomal protein</keyword>
<keyword id="KW-0694">RNA-binding</keyword>
<keyword id="KW-0699">rRNA-binding</keyword>
<name>RS3_DESHD</name>
<gene>
    <name evidence="1" type="primary">rpsC</name>
    <name type="ordered locus">Dhaf_0428</name>
</gene>
<accession>B8G1X2</accession>
<protein>
    <recommendedName>
        <fullName evidence="1">Small ribosomal subunit protein uS3</fullName>
    </recommendedName>
    <alternativeName>
        <fullName evidence="2">30S ribosomal protein S3</fullName>
    </alternativeName>
</protein>
<comment type="function">
    <text evidence="1">Binds the lower part of the 30S subunit head. Binds mRNA in the 70S ribosome, positioning it for translation.</text>
</comment>
<comment type="subunit">
    <text evidence="1">Part of the 30S ribosomal subunit. Forms a tight complex with proteins S10 and S14.</text>
</comment>
<comment type="similarity">
    <text evidence="1">Belongs to the universal ribosomal protein uS3 family.</text>
</comment>
<dbReference type="EMBL" id="CP001336">
    <property type="protein sequence ID" value="ACL18495.1"/>
    <property type="molecule type" value="Genomic_DNA"/>
</dbReference>
<dbReference type="RefSeq" id="WP_015942759.1">
    <property type="nucleotide sequence ID" value="NC_011830.1"/>
</dbReference>
<dbReference type="SMR" id="B8G1X2"/>
<dbReference type="KEGG" id="dhd:Dhaf_0428"/>
<dbReference type="HOGENOM" id="CLU_058591_0_2_9"/>
<dbReference type="Proteomes" id="UP000007726">
    <property type="component" value="Chromosome"/>
</dbReference>
<dbReference type="GO" id="GO:0022627">
    <property type="term" value="C:cytosolic small ribosomal subunit"/>
    <property type="evidence" value="ECO:0007669"/>
    <property type="project" value="TreeGrafter"/>
</dbReference>
<dbReference type="GO" id="GO:0003729">
    <property type="term" value="F:mRNA binding"/>
    <property type="evidence" value="ECO:0007669"/>
    <property type="project" value="UniProtKB-UniRule"/>
</dbReference>
<dbReference type="GO" id="GO:0019843">
    <property type="term" value="F:rRNA binding"/>
    <property type="evidence" value="ECO:0007669"/>
    <property type="project" value="UniProtKB-UniRule"/>
</dbReference>
<dbReference type="GO" id="GO:0003735">
    <property type="term" value="F:structural constituent of ribosome"/>
    <property type="evidence" value="ECO:0007669"/>
    <property type="project" value="InterPro"/>
</dbReference>
<dbReference type="GO" id="GO:0006412">
    <property type="term" value="P:translation"/>
    <property type="evidence" value="ECO:0007669"/>
    <property type="project" value="UniProtKB-UniRule"/>
</dbReference>
<dbReference type="CDD" id="cd02412">
    <property type="entry name" value="KH-II_30S_S3"/>
    <property type="match status" value="1"/>
</dbReference>
<dbReference type="FunFam" id="3.30.1140.32:FF:000001">
    <property type="entry name" value="30S ribosomal protein S3"/>
    <property type="match status" value="1"/>
</dbReference>
<dbReference type="FunFam" id="3.30.300.20:FF:000001">
    <property type="entry name" value="30S ribosomal protein S3"/>
    <property type="match status" value="1"/>
</dbReference>
<dbReference type="Gene3D" id="3.30.300.20">
    <property type="match status" value="1"/>
</dbReference>
<dbReference type="Gene3D" id="3.30.1140.32">
    <property type="entry name" value="Ribosomal protein S3, C-terminal domain"/>
    <property type="match status" value="1"/>
</dbReference>
<dbReference type="HAMAP" id="MF_01309_B">
    <property type="entry name" value="Ribosomal_uS3_B"/>
    <property type="match status" value="1"/>
</dbReference>
<dbReference type="InterPro" id="IPR004087">
    <property type="entry name" value="KH_dom"/>
</dbReference>
<dbReference type="InterPro" id="IPR015946">
    <property type="entry name" value="KH_dom-like_a/b"/>
</dbReference>
<dbReference type="InterPro" id="IPR004044">
    <property type="entry name" value="KH_dom_type_2"/>
</dbReference>
<dbReference type="InterPro" id="IPR009019">
    <property type="entry name" value="KH_sf_prok-type"/>
</dbReference>
<dbReference type="InterPro" id="IPR036419">
    <property type="entry name" value="Ribosomal_S3_C_sf"/>
</dbReference>
<dbReference type="InterPro" id="IPR005704">
    <property type="entry name" value="Ribosomal_uS3_bac-typ"/>
</dbReference>
<dbReference type="InterPro" id="IPR001351">
    <property type="entry name" value="Ribosomal_uS3_C"/>
</dbReference>
<dbReference type="InterPro" id="IPR018280">
    <property type="entry name" value="Ribosomal_uS3_CS"/>
</dbReference>
<dbReference type="NCBIfam" id="TIGR01009">
    <property type="entry name" value="rpsC_bact"/>
    <property type="match status" value="1"/>
</dbReference>
<dbReference type="PANTHER" id="PTHR11760">
    <property type="entry name" value="30S/40S RIBOSOMAL PROTEIN S3"/>
    <property type="match status" value="1"/>
</dbReference>
<dbReference type="PANTHER" id="PTHR11760:SF19">
    <property type="entry name" value="SMALL RIBOSOMAL SUBUNIT PROTEIN US3C"/>
    <property type="match status" value="1"/>
</dbReference>
<dbReference type="Pfam" id="PF07650">
    <property type="entry name" value="KH_2"/>
    <property type="match status" value="1"/>
</dbReference>
<dbReference type="Pfam" id="PF00189">
    <property type="entry name" value="Ribosomal_S3_C"/>
    <property type="match status" value="1"/>
</dbReference>
<dbReference type="SMART" id="SM00322">
    <property type="entry name" value="KH"/>
    <property type="match status" value="1"/>
</dbReference>
<dbReference type="SUPFAM" id="SSF54814">
    <property type="entry name" value="Prokaryotic type KH domain (KH-domain type II)"/>
    <property type="match status" value="1"/>
</dbReference>
<dbReference type="SUPFAM" id="SSF54821">
    <property type="entry name" value="Ribosomal protein S3 C-terminal domain"/>
    <property type="match status" value="1"/>
</dbReference>
<dbReference type="PROSITE" id="PS50823">
    <property type="entry name" value="KH_TYPE_2"/>
    <property type="match status" value="1"/>
</dbReference>
<dbReference type="PROSITE" id="PS00548">
    <property type="entry name" value="RIBOSOMAL_S3"/>
    <property type="match status" value="1"/>
</dbReference>
<reference key="1">
    <citation type="journal article" date="2012" name="BMC Microbiol.">
        <title>Genome sequence of Desulfitobacterium hafniense DCB-2, a Gram-positive anaerobe capable of dehalogenation and metal reduction.</title>
        <authorList>
            <person name="Kim S.H."/>
            <person name="Harzman C."/>
            <person name="Davis J.K."/>
            <person name="Hutcheson R."/>
            <person name="Broderick J.B."/>
            <person name="Marsh T.L."/>
            <person name="Tiedje J.M."/>
        </authorList>
    </citation>
    <scope>NUCLEOTIDE SEQUENCE [LARGE SCALE GENOMIC DNA]</scope>
    <source>
        <strain>DSM 10664 / DCB-2</strain>
    </source>
</reference>
<evidence type="ECO:0000255" key="1">
    <source>
        <dbReference type="HAMAP-Rule" id="MF_01309"/>
    </source>
</evidence>
<evidence type="ECO:0000305" key="2"/>
<proteinExistence type="inferred from homology"/>
<organism>
    <name type="scientific">Desulfitobacterium hafniense (strain DSM 10664 / DCB-2)</name>
    <dbReference type="NCBI Taxonomy" id="272564"/>
    <lineage>
        <taxon>Bacteria</taxon>
        <taxon>Bacillati</taxon>
        <taxon>Bacillota</taxon>
        <taxon>Clostridia</taxon>
        <taxon>Eubacteriales</taxon>
        <taxon>Desulfitobacteriaceae</taxon>
        <taxon>Desulfitobacterium</taxon>
    </lineage>
</organism>
<feature type="chain" id="PRO_1000165493" description="Small ribosomal subunit protein uS3">
    <location>
        <begin position="1"/>
        <end position="219"/>
    </location>
</feature>
<feature type="domain" description="KH type-2" evidence="1">
    <location>
        <begin position="38"/>
        <end position="106"/>
    </location>
</feature>
<sequence length="219" mass="24398">MGQKVNPKGLRVGIIRDWEGRWFADKNYLELLHEDLKVRKFVKTKLQQAGVPKVEIERAANRVKVSIYAAKPGIVIGRGGTEVENLRKQLEAMTGKQVAVNIVEVKKPELDAQLVAESVAQQLEKRVSFRRAMKQTVQRTMRQGGQGIKISCSGRLGGAEIARTEWYSEGKVPLHTLRADIDYGFAEANTTYGKIGVKVWIYKGEVLPAKKVAQVEGGK</sequence>